<sequence length="570" mass="63261">MNSTPDLISPQKSNSSNSYELESGRSKAMNTPEGKNESFHDNLSESQVQPAVAPPNTGKGVYVTVSICCVMVAFGGFIFGWDTGTISGFVAQTDFLRRFGMKHHDGSHYLSKVRTGLIVSIFNIGCAIGGIVLAKLGDMYGRRIGLIVVVVIYTIGIIIQIASINKWYQYFIGRIISGLGVGGITVLSPMLISEVAPSEMRGTLVSCYQVMITLGIFLGYCTNFGTKNYSNSVQWRVPLGLCFAWALFMIGGMMFVPESPRYLVEAGRIDEARASLAKVNKCPPDHPYIQYELETIEASVEEMRAAGTASWGELFTGKPAMFQRTMMGIMIQSLQQLTGDNYFFYYGTIVFQAVGLSDSFETSIVFGVVNFFSTCCSLYTVDRFGRRNCLMWGAVGMVCCYVVYASVGVTRLWPNGQDQPSSKGAGNCMIVFACFYIFCFATTWAPIAYVVISECFPLRVKSKCMSIASAANWIWGFLISFFTPFITGAINFYYGYVFMGCMVFAYFYVFFFVPETKGLSLEEVNDMYAEGVLPWKSASWVPVSKRGADYNADDLMHDDQPFYKSLFSRK</sequence>
<name>HXT1_YEAST</name>
<protein>
    <recommendedName>
        <fullName>Low-affinity glucose transporter HXT1</fullName>
    </recommendedName>
</protein>
<reference key="1">
    <citation type="journal article" date="1991" name="Mol. Cell. Biol.">
        <title>The HXT1 gene product of Saccharomyces cerevisiae is a new member of the family of hexose transporters.</title>
        <authorList>
            <person name="Lewis D.A."/>
            <person name="Bisson L.F."/>
        </authorList>
    </citation>
    <scope>NUCLEOTIDE SEQUENCE [GENOMIC DNA]</scope>
</reference>
<reference key="2">
    <citation type="journal article" date="1993" name="Mol. Cell. Biol.">
        <title>Roles of multiple glucose transporters in Saccharomyces cerevisiae.</title>
        <authorList>
            <person name="Ko C.H."/>
            <person name="Liang H."/>
            <person name="Gaber R.F."/>
        </authorList>
    </citation>
    <scope>NUCLEOTIDE SEQUENCE [GENOMIC DNA]</scope>
</reference>
<reference key="3">
    <citation type="journal article" date="1994" name="Science">
        <title>Complete nucleotide sequence of Saccharomyces cerevisiae chromosome VIII.</title>
        <authorList>
            <person name="Johnston M."/>
            <person name="Andrews S."/>
            <person name="Brinkman R."/>
            <person name="Cooper J."/>
            <person name="Ding H."/>
            <person name="Dover J."/>
            <person name="Du Z."/>
            <person name="Favello A."/>
            <person name="Fulton L."/>
            <person name="Gattung S."/>
            <person name="Geisel C."/>
            <person name="Kirsten J."/>
            <person name="Kucaba T."/>
            <person name="Hillier L.W."/>
            <person name="Jier M."/>
            <person name="Johnston L."/>
            <person name="Langston Y."/>
            <person name="Latreille P."/>
            <person name="Louis E.J."/>
            <person name="Macri C."/>
            <person name="Mardis E."/>
            <person name="Menezes S."/>
            <person name="Mouser L."/>
            <person name="Nhan M."/>
            <person name="Rifkin L."/>
            <person name="Riles L."/>
            <person name="St Peter H."/>
            <person name="Trevaskis E."/>
            <person name="Vaughan K."/>
            <person name="Vignati D."/>
            <person name="Wilcox L."/>
            <person name="Wohldman P."/>
            <person name="Waterston R."/>
            <person name="Wilson R."/>
            <person name="Vaudin M."/>
        </authorList>
    </citation>
    <scope>NUCLEOTIDE SEQUENCE [LARGE SCALE GENOMIC DNA]</scope>
    <source>
        <strain>ATCC 204508 / S288c</strain>
    </source>
</reference>
<reference key="4">
    <citation type="journal article" date="2014" name="G3 (Bethesda)">
        <title>The reference genome sequence of Saccharomyces cerevisiae: Then and now.</title>
        <authorList>
            <person name="Engel S.R."/>
            <person name="Dietrich F.S."/>
            <person name="Fisk D.G."/>
            <person name="Binkley G."/>
            <person name="Balakrishnan R."/>
            <person name="Costanzo M.C."/>
            <person name="Dwight S.S."/>
            <person name="Hitz B.C."/>
            <person name="Karra K."/>
            <person name="Nash R.S."/>
            <person name="Weng S."/>
            <person name="Wong E.D."/>
            <person name="Lloyd P."/>
            <person name="Skrzypek M.S."/>
            <person name="Miyasato S.R."/>
            <person name="Simison M."/>
            <person name="Cherry J.M."/>
        </authorList>
    </citation>
    <scope>GENOME REANNOTATION</scope>
    <source>
        <strain>ATCC 204508 / S288c</strain>
    </source>
</reference>
<reference key="5">
    <citation type="journal article" date="2003" name="Nature">
        <title>Global analysis of protein expression in yeast.</title>
        <authorList>
            <person name="Ghaemmaghami S."/>
            <person name="Huh W.-K."/>
            <person name="Bower K."/>
            <person name="Howson R.W."/>
            <person name="Belle A."/>
            <person name="Dephoure N."/>
            <person name="O'Shea E.K."/>
            <person name="Weissman J.S."/>
        </authorList>
    </citation>
    <scope>LEVEL OF PROTEIN EXPRESSION [LARGE SCALE ANALYSIS]</scope>
</reference>
<reference key="6">
    <citation type="journal article" date="2006" name="Proc. Natl. Acad. Sci. U.S.A.">
        <title>A global topology map of the Saccharomyces cerevisiae membrane proteome.</title>
        <authorList>
            <person name="Kim H."/>
            <person name="Melen K."/>
            <person name="Oesterberg M."/>
            <person name="von Heijne G."/>
        </authorList>
    </citation>
    <scope>TOPOLOGY [LARGE SCALE ANALYSIS]</scope>
    <source>
        <strain>ATCC 208353 / W303-1A</strain>
    </source>
</reference>
<reference key="7">
    <citation type="journal article" date="2007" name="J. Proteome Res.">
        <title>Large-scale phosphorylation analysis of alpha-factor-arrested Saccharomyces cerevisiae.</title>
        <authorList>
            <person name="Li X."/>
            <person name="Gerber S.A."/>
            <person name="Rudner A.D."/>
            <person name="Beausoleil S.A."/>
            <person name="Haas W."/>
            <person name="Villen J."/>
            <person name="Elias J.E."/>
            <person name="Gygi S.P."/>
        </authorList>
    </citation>
    <scope>PHOSPHORYLATION [LARGE SCALE ANALYSIS] AT SER-38 AND SER-44</scope>
    <scope>IDENTIFICATION BY MASS SPECTROMETRY [LARGE SCALE ANALYSIS]</scope>
    <source>
        <strain>ADR376</strain>
    </source>
</reference>
<reference key="8">
    <citation type="journal article" date="2007" name="Proc. Natl. Acad. Sci. U.S.A.">
        <title>Analysis of phosphorylation sites on proteins from Saccharomyces cerevisiae by electron transfer dissociation (ETD) mass spectrometry.</title>
        <authorList>
            <person name="Chi A."/>
            <person name="Huttenhower C."/>
            <person name="Geer L.Y."/>
            <person name="Coon J.J."/>
            <person name="Syka J.E.P."/>
            <person name="Bai D.L."/>
            <person name="Shabanowitz J."/>
            <person name="Burke D.J."/>
            <person name="Troyanskaya O.G."/>
            <person name="Hunt D.F."/>
        </authorList>
    </citation>
    <scope>IDENTIFICATION BY MASS SPECTROMETRY [LARGE SCALE ANALYSIS]</scope>
</reference>
<reference key="9">
    <citation type="journal article" date="2008" name="Mol. Cell. Proteomics">
        <title>A multidimensional chromatography technology for in-depth phosphoproteome analysis.</title>
        <authorList>
            <person name="Albuquerque C.P."/>
            <person name="Smolka M.B."/>
            <person name="Payne S.H."/>
            <person name="Bafna V."/>
            <person name="Eng J."/>
            <person name="Zhou H."/>
        </authorList>
    </citation>
    <scope>PHOSPHORYLATION [LARGE SCALE ANALYSIS] AT SER-23</scope>
    <scope>IDENTIFICATION BY MASS SPECTROMETRY [LARGE SCALE ANALYSIS]</scope>
</reference>
<reference key="10">
    <citation type="journal article" date="2009" name="Science">
        <title>Global analysis of Cdk1 substrate phosphorylation sites provides insights into evolution.</title>
        <authorList>
            <person name="Holt L.J."/>
            <person name="Tuch B.B."/>
            <person name="Villen J."/>
            <person name="Johnson A.D."/>
            <person name="Gygi S.P."/>
            <person name="Morgan D.O."/>
        </authorList>
    </citation>
    <scope>PHOSPHORYLATION [LARGE SCALE ANALYSIS] AT SER-38 AND SER-44</scope>
    <scope>IDENTIFICATION BY MASS SPECTROMETRY [LARGE SCALE ANALYSIS]</scope>
</reference>
<comment type="function">
    <text>Low-affinity glucose transporter. HXT1 is as well involved in the transport of mannose.</text>
</comment>
<comment type="interaction">
    <interactant intactId="EBI-8759">
        <id>P32465</id>
    </interactant>
    <interactant intactId="EBI-13038">
        <id>P33302</id>
        <label>PDR5</label>
    </interactant>
    <organismsDiffer>false</organismsDiffer>
    <experiments>3</experiments>
</comment>
<comment type="interaction">
    <interactant intactId="EBI-8759">
        <id>P32465</id>
    </interactant>
    <interactant intactId="EBI-17590">
        <id>P32568</id>
        <label>SNQ2</label>
    </interactant>
    <organismsDiffer>false</organismsDiffer>
    <experiments>3</experiments>
</comment>
<comment type="subcellular location">
    <subcellularLocation>
        <location>Membrane</location>
        <topology>Multi-pass membrane protein</topology>
    </subcellularLocation>
</comment>
<comment type="developmental stage">
    <text>Expression is maximal during lag and early exponential phases of growth, decreasing upon further entry into exponential growth.</text>
</comment>
<comment type="induction">
    <text>Repressed at high glucose concentrations.</text>
</comment>
<comment type="miscellaneous">
    <text>Glucose transport is thought to be mediated by two kinetically distinct systems, a glucose-repressible high-affinity system and a constitutive low-affinity system.</text>
</comment>
<comment type="miscellaneous">
    <text evidence="3">Present with 23300 molecules/cell in log phase SD medium.</text>
</comment>
<comment type="similarity">
    <text evidence="4">Belongs to the major facilitator superfamily. Sugar transporter (TC 2.A.1.1) family.</text>
</comment>
<dbReference type="EMBL" id="L07079">
    <property type="protein sequence ID" value="AAB59311.1"/>
    <property type="molecule type" value="Genomic_DNA"/>
</dbReference>
<dbReference type="EMBL" id="M82963">
    <property type="protein sequence ID" value="AAA34700.1"/>
    <property type="molecule type" value="Genomic_DNA"/>
</dbReference>
<dbReference type="EMBL" id="U00060">
    <property type="protein sequence ID" value="AAB68933.1"/>
    <property type="molecule type" value="Genomic_DNA"/>
</dbReference>
<dbReference type="EMBL" id="BK006934">
    <property type="protein sequence ID" value="DAA06789.1"/>
    <property type="molecule type" value="Genomic_DNA"/>
</dbReference>
<dbReference type="PIR" id="S38798">
    <property type="entry name" value="S38798"/>
</dbReference>
<dbReference type="RefSeq" id="NP_011962.1">
    <property type="nucleotide sequence ID" value="NM_001179224.1"/>
</dbReference>
<dbReference type="SMR" id="P32465"/>
<dbReference type="BioGRID" id="36528">
    <property type="interactions" value="137"/>
</dbReference>
<dbReference type="DIP" id="DIP-5593N"/>
<dbReference type="FunCoup" id="P32465">
    <property type="interactions" value="1541"/>
</dbReference>
<dbReference type="IntAct" id="P32465">
    <property type="interactions" value="43"/>
</dbReference>
<dbReference type="MINT" id="P32465"/>
<dbReference type="STRING" id="4932.YHR094C"/>
<dbReference type="TCDB" id="2.A.1.1.108">
    <property type="family name" value="the major facilitator superfamily (mfs)"/>
</dbReference>
<dbReference type="GlyCosmos" id="P32465">
    <property type="glycosylation" value="1 site, No reported glycans"/>
</dbReference>
<dbReference type="GlyGen" id="P32465">
    <property type="glycosylation" value="2 sites"/>
</dbReference>
<dbReference type="iPTMnet" id="P32465"/>
<dbReference type="PaxDb" id="4932-YHR094C"/>
<dbReference type="PeptideAtlas" id="P32465"/>
<dbReference type="EnsemblFungi" id="YHR094C_mRNA">
    <property type="protein sequence ID" value="YHR094C"/>
    <property type="gene ID" value="YHR094C"/>
</dbReference>
<dbReference type="GeneID" id="856494"/>
<dbReference type="KEGG" id="sce:YHR094C"/>
<dbReference type="AGR" id="SGD:S000001136"/>
<dbReference type="SGD" id="S000001136">
    <property type="gene designation" value="HXT1"/>
</dbReference>
<dbReference type="VEuPathDB" id="FungiDB:YHR094C"/>
<dbReference type="eggNOG" id="KOG0254">
    <property type="taxonomic scope" value="Eukaryota"/>
</dbReference>
<dbReference type="GeneTree" id="ENSGT00940000176280"/>
<dbReference type="HOGENOM" id="CLU_001265_30_1_1"/>
<dbReference type="InParanoid" id="P32465"/>
<dbReference type="OMA" id="INNMACP"/>
<dbReference type="OrthoDB" id="5141738at2759"/>
<dbReference type="BioCyc" id="MetaCyc:G3O-31140-MONOMER"/>
<dbReference type="BioCyc" id="YEAST:G3O-31140-MONOMER"/>
<dbReference type="BioGRID-ORCS" id="856494">
    <property type="hits" value="2 hits in 10 CRISPR screens"/>
</dbReference>
<dbReference type="PRO" id="PR:P32465"/>
<dbReference type="Proteomes" id="UP000002311">
    <property type="component" value="Chromosome VIII"/>
</dbReference>
<dbReference type="RNAct" id="P32465">
    <property type="molecule type" value="protein"/>
</dbReference>
<dbReference type="GO" id="GO:0071944">
    <property type="term" value="C:cell periphery"/>
    <property type="evidence" value="ECO:0007005"/>
    <property type="project" value="SGD"/>
</dbReference>
<dbReference type="GO" id="GO:0005886">
    <property type="term" value="C:plasma membrane"/>
    <property type="evidence" value="ECO:0000314"/>
    <property type="project" value="SGD"/>
</dbReference>
<dbReference type="GO" id="GO:0005351">
    <property type="term" value="F:carbohydrate:proton symporter activity"/>
    <property type="evidence" value="ECO:0000318"/>
    <property type="project" value="GO_Central"/>
</dbReference>
<dbReference type="GO" id="GO:0055056">
    <property type="term" value="F:D-glucose transmembrane transporter activity"/>
    <property type="evidence" value="ECO:0000304"/>
    <property type="project" value="SGD"/>
</dbReference>
<dbReference type="GO" id="GO:0005353">
    <property type="term" value="F:fructose transmembrane transporter activity"/>
    <property type="evidence" value="ECO:0000315"/>
    <property type="project" value="SGD"/>
</dbReference>
<dbReference type="GO" id="GO:0005354">
    <property type="term" value="F:galactose transmembrane transporter activity"/>
    <property type="evidence" value="ECO:0000304"/>
    <property type="project" value="SGD"/>
</dbReference>
<dbReference type="GO" id="GO:0015578">
    <property type="term" value="F:mannose transmembrane transporter activity"/>
    <property type="evidence" value="ECO:0000304"/>
    <property type="project" value="SGD"/>
</dbReference>
<dbReference type="GO" id="GO:0015146">
    <property type="term" value="F:pentose transmembrane transporter activity"/>
    <property type="evidence" value="ECO:0000315"/>
    <property type="project" value="SGD"/>
</dbReference>
<dbReference type="GO" id="GO:0008643">
    <property type="term" value="P:carbohydrate transport"/>
    <property type="evidence" value="ECO:0000318"/>
    <property type="project" value="GO_Central"/>
</dbReference>
<dbReference type="GO" id="GO:1904659">
    <property type="term" value="P:D-glucose transmembrane transport"/>
    <property type="evidence" value="ECO:0000315"/>
    <property type="project" value="SGD"/>
</dbReference>
<dbReference type="GO" id="GO:0015761">
    <property type="term" value="P:mannose transmembrane transport"/>
    <property type="evidence" value="ECO:0000315"/>
    <property type="project" value="SGD"/>
</dbReference>
<dbReference type="CDD" id="cd17356">
    <property type="entry name" value="MFS_HXT"/>
    <property type="match status" value="1"/>
</dbReference>
<dbReference type="FunFam" id="1.20.1250.20:FF:000044">
    <property type="entry name" value="Hexose transporter Hxt3p"/>
    <property type="match status" value="1"/>
</dbReference>
<dbReference type="Gene3D" id="1.20.1250.20">
    <property type="entry name" value="MFS general substrate transporter like domains"/>
    <property type="match status" value="1"/>
</dbReference>
<dbReference type="InterPro" id="IPR020846">
    <property type="entry name" value="MFS_dom"/>
</dbReference>
<dbReference type="InterPro" id="IPR005828">
    <property type="entry name" value="MFS_sugar_transport-like"/>
</dbReference>
<dbReference type="InterPro" id="IPR050360">
    <property type="entry name" value="MFS_Sugar_Transporters"/>
</dbReference>
<dbReference type="InterPro" id="IPR036259">
    <property type="entry name" value="MFS_trans_sf"/>
</dbReference>
<dbReference type="InterPro" id="IPR003663">
    <property type="entry name" value="Sugar/inositol_transpt"/>
</dbReference>
<dbReference type="InterPro" id="IPR005829">
    <property type="entry name" value="Sugar_transporter_CS"/>
</dbReference>
<dbReference type="NCBIfam" id="TIGR00879">
    <property type="entry name" value="SP"/>
    <property type="match status" value="1"/>
</dbReference>
<dbReference type="PANTHER" id="PTHR48022:SF75">
    <property type="entry name" value="GALACTOSE TRANSPORTER-RELATED"/>
    <property type="match status" value="1"/>
</dbReference>
<dbReference type="PANTHER" id="PTHR48022">
    <property type="entry name" value="PLASTIDIC GLUCOSE TRANSPORTER 4"/>
    <property type="match status" value="1"/>
</dbReference>
<dbReference type="Pfam" id="PF00083">
    <property type="entry name" value="Sugar_tr"/>
    <property type="match status" value="1"/>
</dbReference>
<dbReference type="PRINTS" id="PR00171">
    <property type="entry name" value="SUGRTRNSPORT"/>
</dbReference>
<dbReference type="SUPFAM" id="SSF103473">
    <property type="entry name" value="MFS general substrate transporter"/>
    <property type="match status" value="1"/>
</dbReference>
<dbReference type="PROSITE" id="PS50850">
    <property type="entry name" value="MFS"/>
    <property type="match status" value="1"/>
</dbReference>
<dbReference type="PROSITE" id="PS00216">
    <property type="entry name" value="SUGAR_TRANSPORT_1"/>
    <property type="match status" value="1"/>
</dbReference>
<dbReference type="PROSITE" id="PS00217">
    <property type="entry name" value="SUGAR_TRANSPORT_2"/>
    <property type="match status" value="1"/>
</dbReference>
<organism>
    <name type="scientific">Saccharomyces cerevisiae (strain ATCC 204508 / S288c)</name>
    <name type="common">Baker's yeast</name>
    <dbReference type="NCBI Taxonomy" id="559292"/>
    <lineage>
        <taxon>Eukaryota</taxon>
        <taxon>Fungi</taxon>
        <taxon>Dikarya</taxon>
        <taxon>Ascomycota</taxon>
        <taxon>Saccharomycotina</taxon>
        <taxon>Saccharomycetes</taxon>
        <taxon>Saccharomycetales</taxon>
        <taxon>Saccharomycetaceae</taxon>
        <taxon>Saccharomyces</taxon>
    </lineage>
</organism>
<proteinExistence type="evidence at protein level"/>
<accession>P32465</accession>
<accession>D3DL45</accession>
<evidence type="ECO:0000255" key="1"/>
<evidence type="ECO:0000256" key="2">
    <source>
        <dbReference type="SAM" id="MobiDB-lite"/>
    </source>
</evidence>
<evidence type="ECO:0000269" key="3">
    <source>
    </source>
</evidence>
<evidence type="ECO:0000305" key="4"/>
<evidence type="ECO:0007744" key="5">
    <source>
    </source>
</evidence>
<evidence type="ECO:0007744" key="6">
    <source>
    </source>
</evidence>
<evidence type="ECO:0007744" key="7">
    <source>
    </source>
</evidence>
<feature type="chain" id="PRO_0000050391" description="Low-affinity glucose transporter HXT1">
    <location>
        <begin position="1"/>
        <end position="570"/>
    </location>
</feature>
<feature type="topological domain" description="Cytoplasmic" evidence="1">
    <location>
        <begin position="1"/>
        <end position="60"/>
    </location>
</feature>
<feature type="transmembrane region" description="Helical; Name=1" evidence="1">
    <location>
        <begin position="61"/>
        <end position="81"/>
    </location>
</feature>
<feature type="topological domain" description="Extracellular" evidence="1">
    <location>
        <begin position="82"/>
        <end position="116"/>
    </location>
</feature>
<feature type="transmembrane region" description="Helical; Name=2" evidence="1">
    <location>
        <begin position="117"/>
        <end position="137"/>
    </location>
</feature>
<feature type="topological domain" description="Cytoplasmic" evidence="1">
    <location>
        <begin position="138"/>
        <end position="143"/>
    </location>
</feature>
<feature type="transmembrane region" description="Helical; Name=3" evidence="1">
    <location>
        <begin position="144"/>
        <end position="164"/>
    </location>
</feature>
<feature type="topological domain" description="Extracellular" evidence="1">
    <location>
        <begin position="165"/>
        <end position="174"/>
    </location>
</feature>
<feature type="transmembrane region" description="Helical; Name=4" evidence="1">
    <location>
        <begin position="175"/>
        <end position="195"/>
    </location>
</feature>
<feature type="topological domain" description="Cytoplasmic" evidence="1">
    <location>
        <begin position="196"/>
        <end position="201"/>
    </location>
</feature>
<feature type="transmembrane region" description="Helical; Name=5" evidence="1">
    <location>
        <begin position="202"/>
        <end position="222"/>
    </location>
</feature>
<feature type="topological domain" description="Extracellular" evidence="1">
    <location>
        <begin position="223"/>
        <end position="236"/>
    </location>
</feature>
<feature type="transmembrane region" description="Helical; Name=6" evidence="1">
    <location>
        <begin position="237"/>
        <end position="257"/>
    </location>
</feature>
<feature type="topological domain" description="Cytoplasmic" evidence="1">
    <location>
        <begin position="258"/>
        <end position="340"/>
    </location>
</feature>
<feature type="transmembrane region" description="Helical; Name=7" evidence="1">
    <location>
        <begin position="341"/>
        <end position="357"/>
    </location>
</feature>
<feature type="topological domain" description="Extracellular" evidence="1">
    <location>
        <begin position="358"/>
        <end position="363"/>
    </location>
</feature>
<feature type="transmembrane region" description="Helical; Name=8" evidence="1">
    <location>
        <begin position="364"/>
        <end position="381"/>
    </location>
</feature>
<feature type="topological domain" description="Cytoplasmic" evidence="1">
    <location>
        <begin position="382"/>
        <end position="388"/>
    </location>
</feature>
<feature type="transmembrane region" description="Helical; Name=9" evidence="1">
    <location>
        <begin position="389"/>
        <end position="409"/>
    </location>
</feature>
<feature type="topological domain" description="Extracellular" evidence="1">
    <location>
        <begin position="410"/>
        <end position="431"/>
    </location>
</feature>
<feature type="transmembrane region" description="Helical; Name=10" evidence="1">
    <location>
        <begin position="432"/>
        <end position="452"/>
    </location>
</feature>
<feature type="topological domain" description="Cytoplasmic" evidence="1">
    <location>
        <begin position="453"/>
        <end position="469"/>
    </location>
</feature>
<feature type="transmembrane region" description="Helical; Name=11" evidence="1">
    <location>
        <begin position="470"/>
        <end position="490"/>
    </location>
</feature>
<feature type="topological domain" description="Extracellular" evidence="1">
    <location>
        <position position="491"/>
    </location>
</feature>
<feature type="transmembrane region" description="Helical; Name=12" evidence="1">
    <location>
        <begin position="492"/>
        <end position="512"/>
    </location>
</feature>
<feature type="topological domain" description="Cytoplasmic" evidence="1">
    <location>
        <begin position="513"/>
        <end position="570"/>
    </location>
</feature>
<feature type="region of interest" description="Disordered" evidence="2">
    <location>
        <begin position="1"/>
        <end position="51"/>
    </location>
</feature>
<feature type="compositionally biased region" description="Polar residues" evidence="2">
    <location>
        <begin position="1"/>
        <end position="20"/>
    </location>
</feature>
<feature type="compositionally biased region" description="Basic and acidic residues" evidence="2">
    <location>
        <begin position="34"/>
        <end position="43"/>
    </location>
</feature>
<feature type="modified residue" description="Phosphoserine" evidence="6">
    <location>
        <position position="23"/>
    </location>
</feature>
<feature type="modified residue" description="Phosphoserine" evidence="5 7">
    <location>
        <position position="38"/>
    </location>
</feature>
<feature type="modified residue" description="Phosphoserine" evidence="5 7">
    <location>
        <position position="44"/>
    </location>
</feature>
<feature type="glycosylation site" description="N-linked (GlcNAc...) asparagine" evidence="1">
    <location>
        <position position="228"/>
    </location>
</feature>
<feature type="sequence conflict" description="In Ref. 1; AAA34700." evidence="4" ref="1">
    <location>
        <position position="70"/>
    </location>
</feature>
<feature type="sequence conflict" description="In Ref. 1; AAA34700." evidence="4" ref="1">
    <original>S</original>
    <variation>T</variation>
    <location>
        <position position="469"/>
    </location>
</feature>
<keyword id="KW-0325">Glycoprotein</keyword>
<keyword id="KW-0472">Membrane</keyword>
<keyword id="KW-0597">Phosphoprotein</keyword>
<keyword id="KW-1185">Reference proteome</keyword>
<keyword id="KW-0677">Repeat</keyword>
<keyword id="KW-0762">Sugar transport</keyword>
<keyword id="KW-0812">Transmembrane</keyword>
<keyword id="KW-1133">Transmembrane helix</keyword>
<keyword id="KW-0813">Transport</keyword>
<gene>
    <name type="primary">HXT1</name>
    <name type="synonym">HOR4</name>
    <name type="ordered locus">YHR094C</name>
</gene>